<evidence type="ECO:0000250" key="1"/>
<evidence type="ECO:0000250" key="2">
    <source>
        <dbReference type="UniProtKB" id="P21888"/>
    </source>
</evidence>
<evidence type="ECO:0000250" key="3">
    <source>
        <dbReference type="UniProtKB" id="P49589"/>
    </source>
</evidence>
<evidence type="ECO:0000256" key="4">
    <source>
        <dbReference type="SAM" id="MobiDB-lite"/>
    </source>
</evidence>
<evidence type="ECO:0000303" key="5">
    <source>
    </source>
</evidence>
<evidence type="ECO:0000305" key="6"/>
<evidence type="ECO:0007744" key="7">
    <source>
    </source>
</evidence>
<dbReference type="EC" id="6.1.1.16" evidence="3"/>
<dbReference type="EMBL" id="AJ276505">
    <property type="protein sequence ID" value="CAC16398.1"/>
    <property type="molecule type" value="Genomic_DNA"/>
</dbReference>
<dbReference type="EMBL" id="AJ276796">
    <property type="protein sequence ID" value="CAC16403.1"/>
    <property type="molecule type" value="mRNA"/>
</dbReference>
<dbReference type="EMBL" id="AK033328">
    <property type="protein sequence ID" value="BAC28234.1"/>
    <property type="molecule type" value="mRNA"/>
</dbReference>
<dbReference type="EMBL" id="AK037227">
    <property type="protein sequence ID" value="BAC29766.1"/>
    <property type="molecule type" value="mRNA"/>
</dbReference>
<dbReference type="EMBL" id="AK077558">
    <property type="protein sequence ID" value="BAC36862.1"/>
    <property type="molecule type" value="mRNA"/>
</dbReference>
<dbReference type="EMBL" id="BC030473">
    <property type="protein sequence ID" value="AAH30473.1"/>
    <property type="molecule type" value="mRNA"/>
</dbReference>
<dbReference type="EMBL" id="BC054717">
    <property type="protein sequence ID" value="AAH54717.1"/>
    <property type="molecule type" value="mRNA"/>
</dbReference>
<dbReference type="EMBL" id="BC058954">
    <property type="protein sequence ID" value="AAH58954.1"/>
    <property type="molecule type" value="mRNA"/>
</dbReference>
<dbReference type="EMBL" id="AB015589">
    <property type="protein sequence ID" value="BAA29032.1"/>
    <property type="molecule type" value="mRNA"/>
</dbReference>
<dbReference type="CCDS" id="CCDS40198.1">
    <molecule id="Q9ER72-1"/>
</dbReference>
<dbReference type="CCDS" id="CCDS57597.1">
    <molecule id="Q9ER72-2"/>
</dbReference>
<dbReference type="RefSeq" id="NP_001239522.1">
    <molecule id="Q9ER72-2"/>
    <property type="nucleotide sequence ID" value="NM_001252593.1"/>
</dbReference>
<dbReference type="RefSeq" id="NP_038770.3">
    <molecule id="Q9ER72-1"/>
    <property type="nucleotide sequence ID" value="NM_013742.5"/>
</dbReference>
<dbReference type="SMR" id="Q9ER72"/>
<dbReference type="BioGRID" id="205152">
    <property type="interactions" value="18"/>
</dbReference>
<dbReference type="FunCoup" id="Q9ER72">
    <property type="interactions" value="3039"/>
</dbReference>
<dbReference type="STRING" id="10090.ENSMUSP00000010899"/>
<dbReference type="GlyGen" id="Q9ER72">
    <property type="glycosylation" value="1 site, 1 O-linked glycan (1 site)"/>
</dbReference>
<dbReference type="iPTMnet" id="Q9ER72"/>
<dbReference type="PhosphoSitePlus" id="Q9ER72"/>
<dbReference type="SwissPalm" id="Q9ER72"/>
<dbReference type="jPOST" id="Q9ER72"/>
<dbReference type="PaxDb" id="10090-ENSMUSP00000010899"/>
<dbReference type="PeptideAtlas" id="Q9ER72"/>
<dbReference type="ProteomicsDB" id="258681">
    <molecule id="Q9ER72-1"/>
</dbReference>
<dbReference type="ProteomicsDB" id="258682">
    <molecule id="Q9ER72-2"/>
</dbReference>
<dbReference type="Pumba" id="Q9ER72"/>
<dbReference type="Antibodypedia" id="1044">
    <property type="antibodies" value="243 antibodies from 30 providers"/>
</dbReference>
<dbReference type="DNASU" id="27267"/>
<dbReference type="Ensembl" id="ENSMUST00000010899.14">
    <molecule id="Q9ER72-1"/>
    <property type="protein sequence ID" value="ENSMUSP00000010899.8"/>
    <property type="gene ID" value="ENSMUSG00000010755.18"/>
</dbReference>
<dbReference type="Ensembl" id="ENSMUST00000105909.4">
    <molecule id="Q9ER72-2"/>
    <property type="protein sequence ID" value="ENSMUSP00000101529.4"/>
    <property type="gene ID" value="ENSMUSG00000010755.18"/>
</dbReference>
<dbReference type="GeneID" id="27267"/>
<dbReference type="KEGG" id="mmu:27267"/>
<dbReference type="UCSC" id="uc009kpn.2">
    <molecule id="Q9ER72-1"/>
    <property type="organism name" value="mouse"/>
</dbReference>
<dbReference type="AGR" id="MGI:1351477"/>
<dbReference type="CTD" id="833"/>
<dbReference type="MGI" id="MGI:1351477">
    <property type="gene designation" value="Cars1"/>
</dbReference>
<dbReference type="VEuPathDB" id="HostDB:ENSMUSG00000010755"/>
<dbReference type="eggNOG" id="KOG1668">
    <property type="taxonomic scope" value="Eukaryota"/>
</dbReference>
<dbReference type="eggNOG" id="KOG2007">
    <property type="taxonomic scope" value="Eukaryota"/>
</dbReference>
<dbReference type="GeneTree" id="ENSGT00390000006347"/>
<dbReference type="HOGENOM" id="CLU_013528_3_3_1"/>
<dbReference type="InParanoid" id="Q9ER72"/>
<dbReference type="OMA" id="FHNDMKS"/>
<dbReference type="OrthoDB" id="438179at2759"/>
<dbReference type="PhylomeDB" id="Q9ER72"/>
<dbReference type="TreeFam" id="TF300384"/>
<dbReference type="BioGRID-ORCS" id="27267">
    <property type="hits" value="24 hits in 80 CRISPR screens"/>
</dbReference>
<dbReference type="ChiTaRS" id="Cars">
    <property type="organism name" value="mouse"/>
</dbReference>
<dbReference type="PRO" id="PR:Q9ER72"/>
<dbReference type="Proteomes" id="UP000000589">
    <property type="component" value="Chromosome 7"/>
</dbReference>
<dbReference type="RNAct" id="Q9ER72">
    <property type="molecule type" value="protein"/>
</dbReference>
<dbReference type="Bgee" id="ENSMUSG00000010755">
    <property type="expression patterns" value="Expressed in retinal neural layer and 254 other cell types or tissues"/>
</dbReference>
<dbReference type="ExpressionAtlas" id="Q9ER72">
    <property type="expression patterns" value="baseline and differential"/>
</dbReference>
<dbReference type="GO" id="GO:0005737">
    <property type="term" value="C:cytoplasm"/>
    <property type="evidence" value="ECO:0000250"/>
    <property type="project" value="UniProtKB"/>
</dbReference>
<dbReference type="GO" id="GO:0005829">
    <property type="term" value="C:cytosol"/>
    <property type="evidence" value="ECO:0007669"/>
    <property type="project" value="Ensembl"/>
</dbReference>
<dbReference type="GO" id="GO:0005524">
    <property type="term" value="F:ATP binding"/>
    <property type="evidence" value="ECO:0007669"/>
    <property type="project" value="UniProtKB-KW"/>
</dbReference>
<dbReference type="GO" id="GO:0004817">
    <property type="term" value="F:cysteine-tRNA ligase activity"/>
    <property type="evidence" value="ECO:0000250"/>
    <property type="project" value="UniProtKB"/>
</dbReference>
<dbReference type="GO" id="GO:0042802">
    <property type="term" value="F:identical protein binding"/>
    <property type="evidence" value="ECO:0007669"/>
    <property type="project" value="Ensembl"/>
</dbReference>
<dbReference type="GO" id="GO:0046872">
    <property type="term" value="F:metal ion binding"/>
    <property type="evidence" value="ECO:0007669"/>
    <property type="project" value="UniProtKB-KW"/>
</dbReference>
<dbReference type="GO" id="GO:0000049">
    <property type="term" value="F:tRNA binding"/>
    <property type="evidence" value="ECO:0000250"/>
    <property type="project" value="UniProtKB"/>
</dbReference>
<dbReference type="GO" id="GO:0006423">
    <property type="term" value="P:cysteinyl-tRNA aminoacylation"/>
    <property type="evidence" value="ECO:0000250"/>
    <property type="project" value="UniProtKB"/>
</dbReference>
<dbReference type="CDD" id="cd00672">
    <property type="entry name" value="CysRS_core"/>
    <property type="match status" value="1"/>
</dbReference>
<dbReference type="CDD" id="cd10310">
    <property type="entry name" value="GST_C_CysRS_N"/>
    <property type="match status" value="1"/>
</dbReference>
<dbReference type="FunFam" id="3.40.50.620:FF:000027">
    <property type="entry name" value="Cysteine--tRNA ligase, cytoplasmic"/>
    <property type="match status" value="1"/>
</dbReference>
<dbReference type="FunFam" id="3.40.50.620:FF:000228">
    <property type="entry name" value="Cysteinyl-tRNA synthetase"/>
    <property type="match status" value="1"/>
</dbReference>
<dbReference type="FunFam" id="1.20.1050.130:FF:000003">
    <property type="entry name" value="Cysteinyl-tRNA synthetase, cytoplasmic"/>
    <property type="match status" value="1"/>
</dbReference>
<dbReference type="Gene3D" id="1.20.1050.130">
    <property type="match status" value="1"/>
</dbReference>
<dbReference type="Gene3D" id="3.40.50.620">
    <property type="entry name" value="HUPs"/>
    <property type="match status" value="1"/>
</dbReference>
<dbReference type="HAMAP" id="MF_00041">
    <property type="entry name" value="Cys_tRNA_synth"/>
    <property type="match status" value="1"/>
</dbReference>
<dbReference type="InterPro" id="IPR015803">
    <property type="entry name" value="Cys-tRNA-ligase"/>
</dbReference>
<dbReference type="InterPro" id="IPR024909">
    <property type="entry name" value="Cys-tRNA/MSH_ligase"/>
</dbReference>
<dbReference type="InterPro" id="IPR036282">
    <property type="entry name" value="Glutathione-S-Trfase_C_sf"/>
</dbReference>
<dbReference type="InterPro" id="IPR014729">
    <property type="entry name" value="Rossmann-like_a/b/a_fold"/>
</dbReference>
<dbReference type="InterPro" id="IPR032678">
    <property type="entry name" value="tRNA-synt_1_cat_dom"/>
</dbReference>
<dbReference type="InterPro" id="IPR009080">
    <property type="entry name" value="tRNAsynth_Ia_anticodon-bd"/>
</dbReference>
<dbReference type="NCBIfam" id="TIGR00435">
    <property type="entry name" value="cysS"/>
    <property type="match status" value="1"/>
</dbReference>
<dbReference type="PANTHER" id="PTHR10890:SF3">
    <property type="entry name" value="CYSTEINE--TRNA LIGASE, CYTOPLASMIC"/>
    <property type="match status" value="1"/>
</dbReference>
<dbReference type="PANTHER" id="PTHR10890">
    <property type="entry name" value="CYSTEINYL-TRNA SYNTHETASE"/>
    <property type="match status" value="1"/>
</dbReference>
<dbReference type="Pfam" id="PF01406">
    <property type="entry name" value="tRNA-synt_1e"/>
    <property type="match status" value="1"/>
</dbReference>
<dbReference type="PRINTS" id="PR00983">
    <property type="entry name" value="TRNASYNTHCYS"/>
</dbReference>
<dbReference type="SUPFAM" id="SSF47323">
    <property type="entry name" value="Anticodon-binding domain of a subclass of class I aminoacyl-tRNA synthetases"/>
    <property type="match status" value="1"/>
</dbReference>
<dbReference type="SUPFAM" id="SSF47616">
    <property type="entry name" value="GST C-terminal domain-like"/>
    <property type="match status" value="1"/>
</dbReference>
<dbReference type="SUPFAM" id="SSF52374">
    <property type="entry name" value="Nucleotidylyl transferase"/>
    <property type="match status" value="1"/>
</dbReference>
<organism>
    <name type="scientific">Mus musculus</name>
    <name type="common">Mouse</name>
    <dbReference type="NCBI Taxonomy" id="10090"/>
    <lineage>
        <taxon>Eukaryota</taxon>
        <taxon>Metazoa</taxon>
        <taxon>Chordata</taxon>
        <taxon>Craniata</taxon>
        <taxon>Vertebrata</taxon>
        <taxon>Euteleostomi</taxon>
        <taxon>Mammalia</taxon>
        <taxon>Eutheria</taxon>
        <taxon>Euarchontoglires</taxon>
        <taxon>Glires</taxon>
        <taxon>Rodentia</taxon>
        <taxon>Myomorpha</taxon>
        <taxon>Muroidea</taxon>
        <taxon>Muridae</taxon>
        <taxon>Murinae</taxon>
        <taxon>Mus</taxon>
        <taxon>Mus</taxon>
    </lineage>
</organism>
<protein>
    <recommendedName>
        <fullName>Cysteine--tRNA ligase, cytoplasmic</fullName>
        <ecNumber evidence="3">6.1.1.16</ecNumber>
    </recommendedName>
    <alternativeName>
        <fullName>Cysteinyl-tRNA synthetase</fullName>
        <shortName>CysRS</shortName>
    </alternativeName>
</protein>
<gene>
    <name type="primary">Cars1</name>
    <name type="synonym">Cars</name>
</gene>
<comment type="function">
    <text evidence="3">Catalyzes the ATP-dependent ligation of cysteine to tRNA(Cys).</text>
</comment>
<comment type="catalytic activity">
    <reaction evidence="3">
        <text>tRNA(Cys) + L-cysteine + ATP = L-cysteinyl-tRNA(Cys) + AMP + diphosphate</text>
        <dbReference type="Rhea" id="RHEA:17773"/>
        <dbReference type="Rhea" id="RHEA-COMP:9661"/>
        <dbReference type="Rhea" id="RHEA-COMP:9679"/>
        <dbReference type="ChEBI" id="CHEBI:30616"/>
        <dbReference type="ChEBI" id="CHEBI:33019"/>
        <dbReference type="ChEBI" id="CHEBI:35235"/>
        <dbReference type="ChEBI" id="CHEBI:78442"/>
        <dbReference type="ChEBI" id="CHEBI:78517"/>
        <dbReference type="ChEBI" id="CHEBI:456215"/>
        <dbReference type="EC" id="6.1.1.16"/>
    </reaction>
    <physiologicalReaction direction="left-to-right" evidence="3">
        <dbReference type="Rhea" id="RHEA:17774"/>
    </physiologicalReaction>
</comment>
<comment type="cofactor">
    <cofactor evidence="2">
        <name>Zn(2+)</name>
        <dbReference type="ChEBI" id="CHEBI:29105"/>
    </cofactor>
    <text evidence="2">Binds 1 zinc ion per subunit.</text>
</comment>
<comment type="subunit">
    <text evidence="3">Homodimer.</text>
</comment>
<comment type="subcellular location">
    <subcellularLocation>
        <location evidence="3">Cytoplasm</location>
    </subcellularLocation>
</comment>
<comment type="alternative products">
    <event type="alternative splicing"/>
    <isoform>
        <id>Q9ER72-1</id>
        <name>1</name>
        <sequence type="displayed"/>
    </isoform>
    <isoform>
        <id>Q9ER72-2</id>
        <name>2</name>
        <sequence type="described" ref="VSP_010258"/>
    </isoform>
</comment>
<comment type="similarity">
    <text evidence="6">Belongs to the class-I aminoacyl-tRNA synthetase family.</text>
</comment>
<accession>Q9ER72</accession>
<accession>O88303</accession>
<accession>Q8BP81</accession>
<accession>Q8CAY7</accession>
<accession>Q8CCE3</accession>
<accession>Q8K0S4</accession>
<accession>Q9ER68</accession>
<reference key="1">
    <citation type="journal article" date="2000" name="Hum. Mol. Genet.">
        <title>Sequence and functional comparison in the Beckwith-Wiedemann region: implications for a novel imprinting centre and extended imprinting.</title>
        <authorList>
            <person name="Engemann S."/>
            <person name="Stroedicke M."/>
            <person name="Paulsen M."/>
            <person name="Franck O."/>
            <person name="Reinhardt R."/>
            <person name="Lane N."/>
            <person name="Reik W."/>
            <person name="Walter J."/>
        </authorList>
    </citation>
    <scope>NUCLEOTIDE SEQUENCE (ISOFORM 1)</scope>
    <source>
        <strain>129/Sv</strain>
    </source>
</reference>
<reference key="2">
    <citation type="journal article" date="2005" name="Science">
        <title>The transcriptional landscape of the mammalian genome.</title>
        <authorList>
            <person name="Carninci P."/>
            <person name="Kasukawa T."/>
            <person name="Katayama S."/>
            <person name="Gough J."/>
            <person name="Frith M.C."/>
            <person name="Maeda N."/>
            <person name="Oyama R."/>
            <person name="Ravasi T."/>
            <person name="Lenhard B."/>
            <person name="Wells C."/>
            <person name="Kodzius R."/>
            <person name="Shimokawa K."/>
            <person name="Bajic V.B."/>
            <person name="Brenner S.E."/>
            <person name="Batalov S."/>
            <person name="Forrest A.R."/>
            <person name="Zavolan M."/>
            <person name="Davis M.J."/>
            <person name="Wilming L.G."/>
            <person name="Aidinis V."/>
            <person name="Allen J.E."/>
            <person name="Ambesi-Impiombato A."/>
            <person name="Apweiler R."/>
            <person name="Aturaliya R.N."/>
            <person name="Bailey T.L."/>
            <person name="Bansal M."/>
            <person name="Baxter L."/>
            <person name="Beisel K.W."/>
            <person name="Bersano T."/>
            <person name="Bono H."/>
            <person name="Chalk A.M."/>
            <person name="Chiu K.P."/>
            <person name="Choudhary V."/>
            <person name="Christoffels A."/>
            <person name="Clutterbuck D.R."/>
            <person name="Crowe M.L."/>
            <person name="Dalla E."/>
            <person name="Dalrymple B.P."/>
            <person name="de Bono B."/>
            <person name="Della Gatta G."/>
            <person name="di Bernardo D."/>
            <person name="Down T."/>
            <person name="Engstrom P."/>
            <person name="Fagiolini M."/>
            <person name="Faulkner G."/>
            <person name="Fletcher C.F."/>
            <person name="Fukushima T."/>
            <person name="Furuno M."/>
            <person name="Futaki S."/>
            <person name="Gariboldi M."/>
            <person name="Georgii-Hemming P."/>
            <person name="Gingeras T.R."/>
            <person name="Gojobori T."/>
            <person name="Green R.E."/>
            <person name="Gustincich S."/>
            <person name="Harbers M."/>
            <person name="Hayashi Y."/>
            <person name="Hensch T.K."/>
            <person name="Hirokawa N."/>
            <person name="Hill D."/>
            <person name="Huminiecki L."/>
            <person name="Iacono M."/>
            <person name="Ikeo K."/>
            <person name="Iwama A."/>
            <person name="Ishikawa T."/>
            <person name="Jakt M."/>
            <person name="Kanapin A."/>
            <person name="Katoh M."/>
            <person name="Kawasawa Y."/>
            <person name="Kelso J."/>
            <person name="Kitamura H."/>
            <person name="Kitano H."/>
            <person name="Kollias G."/>
            <person name="Krishnan S.P."/>
            <person name="Kruger A."/>
            <person name="Kummerfeld S.K."/>
            <person name="Kurochkin I.V."/>
            <person name="Lareau L.F."/>
            <person name="Lazarevic D."/>
            <person name="Lipovich L."/>
            <person name="Liu J."/>
            <person name="Liuni S."/>
            <person name="McWilliam S."/>
            <person name="Madan Babu M."/>
            <person name="Madera M."/>
            <person name="Marchionni L."/>
            <person name="Matsuda H."/>
            <person name="Matsuzawa S."/>
            <person name="Miki H."/>
            <person name="Mignone F."/>
            <person name="Miyake S."/>
            <person name="Morris K."/>
            <person name="Mottagui-Tabar S."/>
            <person name="Mulder N."/>
            <person name="Nakano N."/>
            <person name="Nakauchi H."/>
            <person name="Ng P."/>
            <person name="Nilsson R."/>
            <person name="Nishiguchi S."/>
            <person name="Nishikawa S."/>
            <person name="Nori F."/>
            <person name="Ohara O."/>
            <person name="Okazaki Y."/>
            <person name="Orlando V."/>
            <person name="Pang K.C."/>
            <person name="Pavan W.J."/>
            <person name="Pavesi G."/>
            <person name="Pesole G."/>
            <person name="Petrovsky N."/>
            <person name="Piazza S."/>
            <person name="Reed J."/>
            <person name="Reid J.F."/>
            <person name="Ring B.Z."/>
            <person name="Ringwald M."/>
            <person name="Rost B."/>
            <person name="Ruan Y."/>
            <person name="Salzberg S.L."/>
            <person name="Sandelin A."/>
            <person name="Schneider C."/>
            <person name="Schoenbach C."/>
            <person name="Sekiguchi K."/>
            <person name="Semple C.A."/>
            <person name="Seno S."/>
            <person name="Sessa L."/>
            <person name="Sheng Y."/>
            <person name="Shibata Y."/>
            <person name="Shimada H."/>
            <person name="Shimada K."/>
            <person name="Silva D."/>
            <person name="Sinclair B."/>
            <person name="Sperling S."/>
            <person name="Stupka E."/>
            <person name="Sugiura K."/>
            <person name="Sultana R."/>
            <person name="Takenaka Y."/>
            <person name="Taki K."/>
            <person name="Tammoja K."/>
            <person name="Tan S.L."/>
            <person name="Tang S."/>
            <person name="Taylor M.S."/>
            <person name="Tegner J."/>
            <person name="Teichmann S.A."/>
            <person name="Ueda H.R."/>
            <person name="van Nimwegen E."/>
            <person name="Verardo R."/>
            <person name="Wei C.L."/>
            <person name="Yagi K."/>
            <person name="Yamanishi H."/>
            <person name="Zabarovsky E."/>
            <person name="Zhu S."/>
            <person name="Zimmer A."/>
            <person name="Hide W."/>
            <person name="Bult C."/>
            <person name="Grimmond S.M."/>
            <person name="Teasdale R.D."/>
            <person name="Liu E.T."/>
            <person name="Brusic V."/>
            <person name="Quackenbush J."/>
            <person name="Wahlestedt C."/>
            <person name="Mattick J.S."/>
            <person name="Hume D.A."/>
            <person name="Kai C."/>
            <person name="Sasaki D."/>
            <person name="Tomaru Y."/>
            <person name="Fukuda S."/>
            <person name="Kanamori-Katayama M."/>
            <person name="Suzuki M."/>
            <person name="Aoki J."/>
            <person name="Arakawa T."/>
            <person name="Iida J."/>
            <person name="Imamura K."/>
            <person name="Itoh M."/>
            <person name="Kato T."/>
            <person name="Kawaji H."/>
            <person name="Kawagashira N."/>
            <person name="Kawashima T."/>
            <person name="Kojima M."/>
            <person name="Kondo S."/>
            <person name="Konno H."/>
            <person name="Nakano K."/>
            <person name="Ninomiya N."/>
            <person name="Nishio T."/>
            <person name="Okada M."/>
            <person name="Plessy C."/>
            <person name="Shibata K."/>
            <person name="Shiraki T."/>
            <person name="Suzuki S."/>
            <person name="Tagami M."/>
            <person name="Waki K."/>
            <person name="Watahiki A."/>
            <person name="Okamura-Oho Y."/>
            <person name="Suzuki H."/>
            <person name="Kawai J."/>
            <person name="Hayashizaki Y."/>
        </authorList>
    </citation>
    <scope>NUCLEOTIDE SEQUENCE [LARGE SCALE MRNA] (ISOFORMS 1 AND 2)</scope>
    <source>
        <strain>C57BL/6J</strain>
        <tissue>Skin</tissue>
        <tissue>Testis</tissue>
    </source>
</reference>
<reference key="3">
    <citation type="journal article" date="2004" name="Genome Res.">
        <title>The status, quality, and expansion of the NIH full-length cDNA project: the Mammalian Gene Collection (MGC).</title>
        <authorList>
            <consortium name="The MGC Project Team"/>
        </authorList>
    </citation>
    <scope>NUCLEOTIDE SEQUENCE [LARGE SCALE MRNA] (ISOFORM 1)</scope>
    <source>
        <strain>C57BL/6J</strain>
        <tissue>Brain</tissue>
        <tissue>Retina</tissue>
    </source>
</reference>
<reference key="4">
    <citation type="submission" date="1998-06" db="EMBL/GenBank/DDBJ databases">
        <title>Mouse cysteinyl-tRNA synthetase mRNA, partial cds.</title>
        <authorList>
            <person name="Yatsuki H."/>
            <person name="Mukai T."/>
        </authorList>
    </citation>
    <scope>NUCLEOTIDE SEQUENCE OF 129-614</scope>
    <source>
        <strain>C57BL/10</strain>
    </source>
</reference>
<reference key="5">
    <citation type="journal article" date="2010" name="Cell">
        <title>A tissue-specific atlas of mouse protein phosphorylation and expression.</title>
        <authorList>
            <person name="Huttlin E.L."/>
            <person name="Jedrychowski M.P."/>
            <person name="Elias J.E."/>
            <person name="Goswami T."/>
            <person name="Rad R."/>
            <person name="Beausoleil S.A."/>
            <person name="Villen J."/>
            <person name="Haas W."/>
            <person name="Sowa M.E."/>
            <person name="Gygi S.P."/>
        </authorList>
    </citation>
    <scope>PHOSPHORYLATION [LARGE SCALE ANALYSIS] AT SER-102 AND SER-390</scope>
    <scope>IDENTIFICATION BY MASS SPECTROMETRY [LARGE SCALE ANALYSIS]</scope>
    <source>
        <tissue>Brain</tissue>
        <tissue>Brown adipose tissue</tissue>
        <tissue>Heart</tissue>
        <tissue>Kidney</tissue>
        <tissue>Liver</tissue>
        <tissue>Lung</tissue>
        <tissue>Pancreas</tissue>
        <tissue>Spleen</tissue>
        <tissue>Testis</tissue>
    </source>
</reference>
<feature type="initiator methionine" description="Removed" evidence="3">
    <location>
        <position position="1"/>
    </location>
</feature>
<feature type="chain" id="PRO_0000159551" description="Cysteine--tRNA ligase, cytoplasmic">
    <location>
        <begin position="2"/>
        <end position="831"/>
    </location>
</feature>
<feature type="region of interest" description="Disordered" evidence="4">
    <location>
        <begin position="736"/>
        <end position="766"/>
    </location>
</feature>
<feature type="short sequence motif" description="'HIGH' region">
    <location>
        <begin position="140"/>
        <end position="150"/>
    </location>
</feature>
<feature type="short sequence motif" description="'KIIK' region">
    <location>
        <begin position="184"/>
        <end position="187"/>
    </location>
</feature>
<feature type="short sequence motif" description="'KMSKS' region">
    <location>
        <begin position="489"/>
        <end position="493"/>
    </location>
</feature>
<feature type="compositionally biased region" description="Basic and acidic residues" evidence="4">
    <location>
        <begin position="736"/>
        <end position="762"/>
    </location>
</feature>
<feature type="binding site" evidence="2">
    <location>
        <position position="138"/>
    </location>
    <ligand>
        <name>Zn(2+)</name>
        <dbReference type="ChEBI" id="CHEBI:29105"/>
    </ligand>
</feature>
<feature type="binding site" evidence="2">
    <location>
        <position position="139"/>
    </location>
    <ligand>
        <name>L-cysteine</name>
        <dbReference type="ChEBI" id="CHEBI:35235"/>
    </ligand>
</feature>
<feature type="binding site" evidence="2">
    <location>
        <position position="179"/>
    </location>
    <ligand>
        <name>L-cysteine</name>
        <dbReference type="ChEBI" id="CHEBI:35235"/>
    </ligand>
</feature>
<feature type="binding site" evidence="2">
    <location>
        <position position="431"/>
    </location>
    <ligand>
        <name>Zn(2+)</name>
        <dbReference type="ChEBI" id="CHEBI:29105"/>
    </ligand>
</feature>
<feature type="binding site" evidence="2">
    <location>
        <position position="456"/>
    </location>
    <ligand>
        <name>L-cysteine</name>
        <dbReference type="ChEBI" id="CHEBI:35235"/>
    </ligand>
</feature>
<feature type="binding site" evidence="2">
    <location>
        <position position="456"/>
    </location>
    <ligand>
        <name>Zn(2+)</name>
        <dbReference type="ChEBI" id="CHEBI:29105"/>
    </ligand>
</feature>
<feature type="binding site" evidence="2">
    <location>
        <position position="460"/>
    </location>
    <ligand>
        <name>Zn(2+)</name>
        <dbReference type="ChEBI" id="CHEBI:29105"/>
    </ligand>
</feature>
<feature type="binding site" evidence="1">
    <location>
        <position position="492"/>
    </location>
    <ligand>
        <name>ATP</name>
        <dbReference type="ChEBI" id="CHEBI:30616"/>
    </ligand>
</feature>
<feature type="modified residue" description="N-acetylalanine" evidence="3">
    <location>
        <position position="2"/>
    </location>
</feature>
<feature type="modified residue" description="Phosphoserine" evidence="7">
    <location>
        <position position="102"/>
    </location>
</feature>
<feature type="modified residue" description="Phosphoserine" evidence="3">
    <location>
        <position position="388"/>
    </location>
</feature>
<feature type="modified residue" description="Phosphoserine" evidence="7">
    <location>
        <position position="390"/>
    </location>
</feature>
<feature type="modified residue" description="Phosphoserine" evidence="3">
    <location>
        <position position="829"/>
    </location>
</feature>
<feature type="splice variant" id="VSP_010258" description="In isoform 2." evidence="5">
    <original>AADYRSILSISDEAARVQALDQHLSTRSYIQGYSLSQADVDVFRQLSAPPADSRLFHVARWFRHIEALLGGPQGRDEPCRLQAS</original>
    <variation>G</variation>
    <location>
        <begin position="9"/>
        <end position="92"/>
    </location>
</feature>
<feature type="sequence conflict" description="In Ref. 3; AAH30473." evidence="6" ref="3">
    <original>R</original>
    <variation>P</variation>
    <location>
        <position position="161"/>
    </location>
</feature>
<feature type="sequence conflict" description="In Ref. 3; AAH30473." evidence="6" ref="3">
    <original>L</original>
    <variation>R</variation>
    <location>
        <position position="164"/>
    </location>
</feature>
<feature type="sequence conflict" description="In Ref. 2; BAC28234." evidence="6" ref="2">
    <original>M</original>
    <variation>K</variation>
    <location>
        <position position="310"/>
    </location>
</feature>
<feature type="sequence conflict" description="In Ref. 4; BAA29032." evidence="6" ref="4">
    <original>L</original>
    <variation>P</variation>
    <location>
        <position position="313"/>
    </location>
</feature>
<feature type="sequence conflict" description="In Ref. 2; BAC28234." evidence="6" ref="2">
    <original>E</original>
    <variation>G</variation>
    <location>
        <position position="742"/>
    </location>
</feature>
<feature type="sequence conflict" description="In Ref. 1; CAC16398." evidence="6" ref="1">
    <original>S</original>
    <variation>G</variation>
    <location>
        <position position="771"/>
    </location>
</feature>
<proteinExistence type="evidence at protein level"/>
<sequence length="831" mass="94860">MAGSSAEQAADYRSILSISDEAARVQALDQHLSTRSYIQGYSLSQADVDVFRQLSAPPADSRLFHVARWFRHIEALLGGPQGRDEPCRLQASKGRRVQPQWSPPAGTEPCRLRLYNSLTRNKDVFIPQDGKKVTWYCCGPTVYDASHMGHARSYISFDILRRVLRDYFQYDVFYCMNITDIDDKIIRRARQNYLFEQYREQKPPATQLLKDVRDAMKPFSVKLSETTDPDKRQMLERIQNSVKLATEPLEQAVRSSLSGEEVDSKVQVLLEEAKDLLSDWLDSTGGSEVTDNSIFSKLPKFWEEEFHKDMEALNVLPPDVLTRVSEYVPEIVNFVQKIVDNGYGYASNGSVYFDTAKFAASEKHSYGKLVPEAVGDQKALQEGEGDLSISADRLSEKRSPNDFALWKASKPGEPSWPCPWGKGRPGWHIECSAMAGTLLGASMDIHGGGFDLRFPHHDNELAQSEAYFENDCWVRYFLHTGHLTIAGCKMSKSLKNFITIKDALKKHSARQLRLAFLMHSWKDTLDYSSNTMESALQYEKFMNEFFLNVKDILRAPVDITGQFEKWEAEEVELNKNFYGKKTAVHEALCDNIDTRTVMEEMRALVSQCNLYMAARKAERRRPNRALLENIAMYLTHMLKIFGAIEEESPLGFPVGGPGTNLNLESTVMPYLQVLSEFREGVRKIAREKKVLEVLQLSDALRDDILPELGVRFEDHEGLPTVVKLVDRDTLLKEKEGKKRAEEEKRRKKEEAARKKQEQEAAKLAKMKIPPSEMFLSEVNKYSKFDENGLPTHDTEGKELSKGQAKKLKKLFEAQEKLYKEYLQMLQNGSLQ</sequence>
<name>SYCC_MOUSE</name>
<keyword id="KW-0007">Acetylation</keyword>
<keyword id="KW-0025">Alternative splicing</keyword>
<keyword id="KW-0030">Aminoacyl-tRNA synthetase</keyword>
<keyword id="KW-0067">ATP-binding</keyword>
<keyword id="KW-0963">Cytoplasm</keyword>
<keyword id="KW-0436">Ligase</keyword>
<keyword id="KW-0479">Metal-binding</keyword>
<keyword id="KW-0547">Nucleotide-binding</keyword>
<keyword id="KW-0597">Phosphoprotein</keyword>
<keyword id="KW-0648">Protein biosynthesis</keyword>
<keyword id="KW-1185">Reference proteome</keyword>
<keyword id="KW-0862">Zinc</keyword>